<protein>
    <recommendedName>
        <fullName>Anthranilate synthase component 1</fullName>
        <ecNumber>4.1.3.27</ecNumber>
    </recommendedName>
    <alternativeName>
        <fullName>Anthranilate synthase component I</fullName>
    </alternativeName>
</protein>
<dbReference type="EC" id="4.1.3.27"/>
<dbReference type="EMBL" id="K01388">
    <property type="protein sequence ID" value="AAA35175.1"/>
    <property type="molecule type" value="Genomic_DNA"/>
</dbReference>
<dbReference type="EMBL" id="X68327">
    <property type="protein sequence ID" value="CAA48402.1"/>
    <property type="molecule type" value="Genomic_DNA"/>
</dbReference>
<dbReference type="EMBL" id="U18839">
    <property type="protein sequence ID" value="AAB64645.1"/>
    <property type="molecule type" value="Genomic_DNA"/>
</dbReference>
<dbReference type="EMBL" id="BK006939">
    <property type="protein sequence ID" value="DAA07751.1"/>
    <property type="molecule type" value="Genomic_DNA"/>
</dbReference>
<dbReference type="PIR" id="A49701">
    <property type="entry name" value="NNBY1"/>
</dbReference>
<dbReference type="RefSeq" id="NP_011014.1">
    <property type="nucleotide sequence ID" value="NM_001178981.1"/>
</dbReference>
<dbReference type="SMR" id="P00899"/>
<dbReference type="BioGRID" id="36835">
    <property type="interactions" value="176"/>
</dbReference>
<dbReference type="ComplexPortal" id="CPX-1850">
    <property type="entry name" value="Anthranilate synthase complex"/>
</dbReference>
<dbReference type="DIP" id="DIP-542N"/>
<dbReference type="FunCoup" id="P00899">
    <property type="interactions" value="270"/>
</dbReference>
<dbReference type="IntAct" id="P00899">
    <property type="interactions" value="18"/>
</dbReference>
<dbReference type="MINT" id="P00899"/>
<dbReference type="STRING" id="4932.YER090W"/>
<dbReference type="GlyGen" id="P00899">
    <property type="glycosylation" value="1 site"/>
</dbReference>
<dbReference type="iPTMnet" id="P00899"/>
<dbReference type="PaxDb" id="4932-YER090W"/>
<dbReference type="PeptideAtlas" id="P00899"/>
<dbReference type="EnsemblFungi" id="YER090W_mRNA">
    <property type="protein sequence ID" value="YER090W"/>
    <property type="gene ID" value="YER090W"/>
</dbReference>
<dbReference type="GeneID" id="856824"/>
<dbReference type="KEGG" id="sce:YER090W"/>
<dbReference type="AGR" id="SGD:S000000892"/>
<dbReference type="SGD" id="S000000892">
    <property type="gene designation" value="TRP2"/>
</dbReference>
<dbReference type="VEuPathDB" id="FungiDB:YER090W"/>
<dbReference type="eggNOG" id="KOG1223">
    <property type="taxonomic scope" value="Eukaryota"/>
</dbReference>
<dbReference type="HOGENOM" id="CLU_006493_9_3_1"/>
<dbReference type="InParanoid" id="P00899"/>
<dbReference type="OMA" id="GCVGYLD"/>
<dbReference type="OrthoDB" id="1865897at2759"/>
<dbReference type="BioCyc" id="YEAST:MONOMER3O-30"/>
<dbReference type="SABIO-RK" id="P00899"/>
<dbReference type="UniPathway" id="UPA00035">
    <property type="reaction ID" value="UER00040"/>
</dbReference>
<dbReference type="BioGRID-ORCS" id="856824">
    <property type="hits" value="4 hits in 10 CRISPR screens"/>
</dbReference>
<dbReference type="CD-CODE" id="E03F929F">
    <property type="entry name" value="Stress granule"/>
</dbReference>
<dbReference type="PRO" id="PR:P00899"/>
<dbReference type="Proteomes" id="UP000002311">
    <property type="component" value="Chromosome V"/>
</dbReference>
<dbReference type="RNAct" id="P00899">
    <property type="molecule type" value="protein"/>
</dbReference>
<dbReference type="GO" id="GO:0005950">
    <property type="term" value="C:anthranilate synthase complex"/>
    <property type="evidence" value="ECO:0000353"/>
    <property type="project" value="ComplexPortal"/>
</dbReference>
<dbReference type="GO" id="GO:0005737">
    <property type="term" value="C:cytoplasm"/>
    <property type="evidence" value="ECO:0007005"/>
    <property type="project" value="SGD"/>
</dbReference>
<dbReference type="GO" id="GO:0004049">
    <property type="term" value="F:anthranilate synthase activity"/>
    <property type="evidence" value="ECO:0000314"/>
    <property type="project" value="SGD"/>
</dbReference>
<dbReference type="GO" id="GO:0046872">
    <property type="term" value="F:metal ion binding"/>
    <property type="evidence" value="ECO:0007669"/>
    <property type="project" value="UniProtKB-KW"/>
</dbReference>
<dbReference type="GO" id="GO:0006541">
    <property type="term" value="P:glutamine metabolic process"/>
    <property type="evidence" value="ECO:0000314"/>
    <property type="project" value="ComplexPortal"/>
</dbReference>
<dbReference type="GO" id="GO:0000162">
    <property type="term" value="P:L-tryptophan biosynthetic process"/>
    <property type="evidence" value="ECO:0000314"/>
    <property type="project" value="ComplexPortal"/>
</dbReference>
<dbReference type="FunFam" id="3.60.120.10:FF:000003">
    <property type="entry name" value="Anthranilate synthase component 1"/>
    <property type="match status" value="1"/>
</dbReference>
<dbReference type="Gene3D" id="3.60.120.10">
    <property type="entry name" value="Anthranilate synthase"/>
    <property type="match status" value="1"/>
</dbReference>
<dbReference type="InterPro" id="IPR005801">
    <property type="entry name" value="ADC_synthase"/>
</dbReference>
<dbReference type="InterPro" id="IPR019999">
    <property type="entry name" value="Anth_synth_I-like"/>
</dbReference>
<dbReference type="InterPro" id="IPR006805">
    <property type="entry name" value="Anth_synth_I_N"/>
</dbReference>
<dbReference type="InterPro" id="IPR005256">
    <property type="entry name" value="Anth_synth_I_PabB"/>
</dbReference>
<dbReference type="InterPro" id="IPR015890">
    <property type="entry name" value="Chorismate_C"/>
</dbReference>
<dbReference type="NCBIfam" id="TIGR00564">
    <property type="entry name" value="trpE_most"/>
    <property type="match status" value="1"/>
</dbReference>
<dbReference type="PANTHER" id="PTHR11236">
    <property type="entry name" value="AMINOBENZOATE/ANTHRANILATE SYNTHASE"/>
    <property type="match status" value="1"/>
</dbReference>
<dbReference type="PANTHER" id="PTHR11236:SF9">
    <property type="entry name" value="ANTHRANILATE SYNTHASE COMPONENT 1"/>
    <property type="match status" value="1"/>
</dbReference>
<dbReference type="Pfam" id="PF04715">
    <property type="entry name" value="Anth_synt_I_N"/>
    <property type="match status" value="1"/>
</dbReference>
<dbReference type="Pfam" id="PF00425">
    <property type="entry name" value="Chorismate_bind"/>
    <property type="match status" value="1"/>
</dbReference>
<dbReference type="PRINTS" id="PR00095">
    <property type="entry name" value="ANTSNTHASEI"/>
</dbReference>
<dbReference type="SUPFAM" id="SSF56322">
    <property type="entry name" value="ADC synthase"/>
    <property type="match status" value="1"/>
</dbReference>
<comment type="catalytic activity">
    <reaction>
        <text>chorismate + L-glutamine = anthranilate + pyruvate + L-glutamate + H(+)</text>
        <dbReference type="Rhea" id="RHEA:21732"/>
        <dbReference type="ChEBI" id="CHEBI:15361"/>
        <dbReference type="ChEBI" id="CHEBI:15378"/>
        <dbReference type="ChEBI" id="CHEBI:16567"/>
        <dbReference type="ChEBI" id="CHEBI:29748"/>
        <dbReference type="ChEBI" id="CHEBI:29985"/>
        <dbReference type="ChEBI" id="CHEBI:58359"/>
        <dbReference type="EC" id="4.1.3.27"/>
    </reaction>
</comment>
<comment type="cofactor">
    <cofactor evidence="1">
        <name>Mg(2+)</name>
        <dbReference type="ChEBI" id="CHEBI:18420"/>
    </cofactor>
    <text evidence="1">Binds 1 Mg(2+) ion per subunit.</text>
</comment>
<comment type="pathway">
    <text>Amino-acid biosynthesis; L-tryptophan biosynthesis; L-tryptophan from chorismate: step 1/5.</text>
</comment>
<comment type="subunit">
    <text>Tetramer of two components I and two components II.</text>
</comment>
<comment type="interaction">
    <interactant intactId="EBI-19575">
        <id>P00899</id>
    </interactant>
    <interactant intactId="EBI-19585">
        <id>P00937</id>
        <label>TRP3</label>
    </interactant>
    <organismsDiffer>false</organismsDiffer>
    <experiments>4</experiments>
</comment>
<comment type="miscellaneous">
    <text>Component I catalyzes the formation of anthranilate using ammonia rather than glutamine, whereas component II provides glutamine amidotransferase activity.</text>
</comment>
<comment type="miscellaneous">
    <text evidence="2">Present with 6510 molecules/cell in log phase SD medium.</text>
</comment>
<comment type="similarity">
    <text evidence="4">Belongs to the anthranilate synthase component I family.</text>
</comment>
<evidence type="ECO:0000250" key="1">
    <source>
        <dbReference type="UniProtKB" id="P00897"/>
    </source>
</evidence>
<evidence type="ECO:0000269" key="2">
    <source>
    </source>
</evidence>
<evidence type="ECO:0000269" key="3">
    <source>
    </source>
</evidence>
<evidence type="ECO:0000305" key="4"/>
<evidence type="ECO:0007744" key="5">
    <source>
    </source>
</evidence>
<proteinExistence type="evidence at protein level"/>
<sequence>MTASIKIQPDIDSLKQLQQQNDDSSINMYPVYAYLPSLDLTPHVAYLKLAQLNNPDRKESFLLESAKTNNELDRYSFIGISPRKTIKTGPTEGIETDPLEILEKEMSTFKVAENVPGLPKLSGGAIGYISYDCVRYFEPKTRRPLKDVLRLPEAYLMLCDTIIAFDNVFQRFQIIHNINTNETSLEEGYQAAAQIITDIVSKLTDDSSPIPYPEQPPIKLNQTFESNVGKEGYENHVSTLKKHIKKGDIIQGVPSQRVARPTSLHPFNIYRHLRTVNPSPYLFYIDCLDFQIIGASPELLCKSDSKNRVITHPIAGTVKRGATTEEDDALADQLRGSLKDRAEHVMLVDLARNDINRICDPLTTSVDKLLTIQKFSHVQHLVSQVSGVLRPEKTRFDAFRSIFPAGTVSGAPKVRAMELIAELEGERRGVYAGAVGHWSYDGKTMDNCIALRTMVYKDGIAYLQAGGGIVYDSDEYDEYVETMNKMMANHSTIVQAEELWADIVGSA</sequence>
<reference key="1">
    <citation type="journal article" date="1984" name="J. Biol. Chem.">
        <title>Nucleotide sequence of Saccharomyces cerevisiae genes TRP2 and TRP3 encoding bifunctional anthranilate synthase: indole-3-glycerol phosphate synthase.</title>
        <authorList>
            <person name="Zalkin H."/>
            <person name="Paluh J.L."/>
            <person name="van Cleemput M."/>
            <person name="Moye W.S."/>
            <person name="Yanofsky C."/>
        </authorList>
    </citation>
    <scope>NUCLEOTIDE SEQUENCE [GENOMIC DNA]</scope>
</reference>
<reference key="2">
    <citation type="journal article" date="1993" name="J. Bacteriol.">
        <title>Analysis of feedback-resistant anthranilate synthases from Saccharomyces cerevisiae.</title>
        <authorList>
            <person name="Graf R."/>
            <person name="Mehmann B."/>
            <person name="Braus G.H."/>
        </authorList>
    </citation>
    <scope>NUCLEOTIDE SEQUENCE [GENOMIC DNA]</scope>
    <source>
        <strain>S288C / X2180-1A</strain>
    </source>
</reference>
<reference key="3">
    <citation type="journal article" date="1997" name="Nature">
        <title>The nucleotide sequence of Saccharomyces cerevisiae chromosome V.</title>
        <authorList>
            <person name="Dietrich F.S."/>
            <person name="Mulligan J.T."/>
            <person name="Hennessy K.M."/>
            <person name="Yelton M.A."/>
            <person name="Allen E."/>
            <person name="Araujo R."/>
            <person name="Aviles E."/>
            <person name="Berno A."/>
            <person name="Brennan T."/>
            <person name="Carpenter J."/>
            <person name="Chen E."/>
            <person name="Cherry J.M."/>
            <person name="Chung E."/>
            <person name="Duncan M."/>
            <person name="Guzman E."/>
            <person name="Hartzell G."/>
            <person name="Hunicke-Smith S."/>
            <person name="Hyman R.W."/>
            <person name="Kayser A."/>
            <person name="Komp C."/>
            <person name="Lashkari D."/>
            <person name="Lew H."/>
            <person name="Lin D."/>
            <person name="Mosedale D."/>
            <person name="Nakahara K."/>
            <person name="Namath A."/>
            <person name="Norgren R."/>
            <person name="Oefner P."/>
            <person name="Oh C."/>
            <person name="Petel F.X."/>
            <person name="Roberts D."/>
            <person name="Sehl P."/>
            <person name="Schramm S."/>
            <person name="Shogren T."/>
            <person name="Smith V."/>
            <person name="Taylor P."/>
            <person name="Wei Y."/>
            <person name="Botstein D."/>
            <person name="Davis R.W."/>
        </authorList>
    </citation>
    <scope>NUCLEOTIDE SEQUENCE [LARGE SCALE GENOMIC DNA]</scope>
    <source>
        <strain>ATCC 204508 / S288c</strain>
    </source>
</reference>
<reference key="4">
    <citation type="journal article" date="2014" name="G3 (Bethesda)">
        <title>The reference genome sequence of Saccharomyces cerevisiae: Then and now.</title>
        <authorList>
            <person name="Engel S.R."/>
            <person name="Dietrich F.S."/>
            <person name="Fisk D.G."/>
            <person name="Binkley G."/>
            <person name="Balakrishnan R."/>
            <person name="Costanzo M.C."/>
            <person name="Dwight S.S."/>
            <person name="Hitz B.C."/>
            <person name="Karra K."/>
            <person name="Nash R.S."/>
            <person name="Weng S."/>
            <person name="Wong E.D."/>
            <person name="Lloyd P."/>
            <person name="Skrzypek M.S."/>
            <person name="Miyasato S.R."/>
            <person name="Simison M."/>
            <person name="Cherry J.M."/>
        </authorList>
    </citation>
    <scope>GENOME REANNOTATION</scope>
    <source>
        <strain>ATCC 204508 / S288c</strain>
    </source>
</reference>
<reference key="5">
    <citation type="journal article" date="1995" name="Yeast">
        <title>Two-dimensional protein map of Saccharomyces cerevisiae: construction of a gene-protein index.</title>
        <authorList>
            <person name="Boucherie H."/>
            <person name="Dujardin G."/>
            <person name="Kermorgant M."/>
            <person name="Monribot C."/>
            <person name="Slonimski P.P."/>
            <person name="Perrot M."/>
        </authorList>
    </citation>
    <scope>PROTEIN SEQUENCE OF 2-16</scope>
    <source>
        <strain>ATCC 204508 / S288c</strain>
    </source>
</reference>
<reference key="6">
    <citation type="journal article" date="2003" name="Nature">
        <title>Global analysis of protein expression in yeast.</title>
        <authorList>
            <person name="Ghaemmaghami S."/>
            <person name="Huh W.-K."/>
            <person name="Bower K."/>
            <person name="Howson R.W."/>
            <person name="Belle A."/>
            <person name="Dephoure N."/>
            <person name="O'Shea E.K."/>
            <person name="Weissman J.S."/>
        </authorList>
    </citation>
    <scope>LEVEL OF PROTEIN EXPRESSION [LARGE SCALE ANALYSIS]</scope>
</reference>
<reference key="7">
    <citation type="journal article" date="2008" name="Mol. Cell. Proteomics">
        <title>A multidimensional chromatography technology for in-depth phosphoproteome analysis.</title>
        <authorList>
            <person name="Albuquerque C.P."/>
            <person name="Smolka M.B."/>
            <person name="Payne S.H."/>
            <person name="Bafna V."/>
            <person name="Eng J."/>
            <person name="Zhou H."/>
        </authorList>
    </citation>
    <scope>PHOSPHORYLATION [LARGE SCALE ANALYSIS] AT SER-81 AND THR-223</scope>
    <scope>IDENTIFICATION BY MASS SPECTROMETRY [LARGE SCALE ANALYSIS]</scope>
</reference>
<accession>P00899</accession>
<accession>D3DLZ7</accession>
<gene>
    <name type="primary">TRP2</name>
    <name type="ordered locus">YER090W</name>
</gene>
<keyword id="KW-0028">Amino-acid biosynthesis</keyword>
<keyword id="KW-0057">Aromatic amino acid biosynthesis</keyword>
<keyword id="KW-0903">Direct protein sequencing</keyword>
<keyword id="KW-0456">Lyase</keyword>
<keyword id="KW-0460">Magnesium</keyword>
<keyword id="KW-0479">Metal-binding</keyword>
<keyword id="KW-0597">Phosphoprotein</keyword>
<keyword id="KW-1185">Reference proteome</keyword>
<keyword id="KW-0822">Tryptophan biosynthesis</keyword>
<feature type="initiator methionine" description="Removed" evidence="3">
    <location>
        <position position="1"/>
    </location>
</feature>
<feature type="chain" id="PRO_0000154134" description="Anthranilate synthase component 1">
    <location>
        <begin position="2"/>
        <end position="507"/>
    </location>
</feature>
<feature type="binding site" evidence="1">
    <location>
        <position position="65"/>
    </location>
    <ligand>
        <name>L-tryptophan</name>
        <dbReference type="ChEBI" id="CHEBI:57912"/>
    </ligand>
</feature>
<feature type="binding site" evidence="1">
    <location>
        <begin position="280"/>
        <end position="282"/>
    </location>
    <ligand>
        <name>L-tryptophan</name>
        <dbReference type="ChEBI" id="CHEBI:57912"/>
    </ligand>
</feature>
<feature type="binding site" evidence="1">
    <location>
        <begin position="316"/>
        <end position="317"/>
    </location>
    <ligand>
        <name>chorismate</name>
        <dbReference type="ChEBI" id="CHEBI:29748"/>
    </ligand>
</feature>
<feature type="binding site" evidence="1">
    <location>
        <position position="343"/>
    </location>
    <ligand>
        <name>Mg(2+)</name>
        <dbReference type="ChEBI" id="CHEBI:18420"/>
    </ligand>
</feature>
<feature type="binding site" evidence="1">
    <location>
        <position position="431"/>
    </location>
    <ligand>
        <name>chorismate</name>
        <dbReference type="ChEBI" id="CHEBI:29748"/>
    </ligand>
</feature>
<feature type="binding site" evidence="1">
    <location>
        <position position="452"/>
    </location>
    <ligand>
        <name>chorismate</name>
        <dbReference type="ChEBI" id="CHEBI:29748"/>
    </ligand>
</feature>
<feature type="binding site" evidence="1">
    <location>
        <begin position="466"/>
        <end position="468"/>
    </location>
    <ligand>
        <name>chorismate</name>
        <dbReference type="ChEBI" id="CHEBI:29748"/>
    </ligand>
</feature>
<feature type="binding site" evidence="1">
    <location>
        <position position="468"/>
    </location>
    <ligand>
        <name>chorismate</name>
        <dbReference type="ChEBI" id="CHEBI:29748"/>
    </ligand>
</feature>
<feature type="binding site" evidence="1">
    <location>
        <position position="481"/>
    </location>
    <ligand>
        <name>Mg(2+)</name>
        <dbReference type="ChEBI" id="CHEBI:18420"/>
    </ligand>
</feature>
<feature type="modified residue" description="Phosphoserine" evidence="5">
    <location>
        <position position="81"/>
    </location>
</feature>
<feature type="modified residue" description="Phosphothreonine" evidence="5">
    <location>
        <position position="223"/>
    </location>
</feature>
<feature type="sequence conflict" description="In Ref. 1; AAA35175." evidence="4" ref="1">
    <original>TDDSSPIPY</original>
    <variation>DRRFLANTI</variation>
    <location>
        <begin position="204"/>
        <end position="212"/>
    </location>
</feature>
<feature type="sequence conflict" description="In Ref. 1." evidence="4" ref="1">
    <original>L</original>
    <variation>P</variation>
    <location>
        <position position="220"/>
    </location>
</feature>
<feature type="sequence conflict" description="In Ref. 1." evidence="4" ref="1">
    <original>TFESNVGKEGYENHVS</original>
    <variation>LLNRMWARKVTKITSP</variation>
    <location>
        <begin position="223"/>
        <end position="238"/>
    </location>
</feature>
<feature type="sequence conflict" description="In Ref. 1; AAA35175." evidence="4" ref="1">
    <original>TSLHPFN</original>
    <variation>SRYILSIFTD</variation>
    <location>
        <begin position="262"/>
        <end position="268"/>
    </location>
</feature>
<feature type="sequence conflict" description="In Ref. 1; AAA35175." evidence="4" ref="1">
    <original>V</original>
    <variation>I</variation>
    <location>
        <position position="276"/>
    </location>
</feature>
<feature type="sequence conflict" description="In Ref. 1; AAA35175." evidence="4" ref="1">
    <original>T</original>
    <variation>A</variation>
    <location>
        <position position="323"/>
    </location>
</feature>
<feature type="sequence conflict" description="In Ref. 1; AAA35175." evidence="4" ref="1">
    <original>L</original>
    <variation>G</variation>
    <location>
        <position position="330"/>
    </location>
</feature>
<feature type="sequence conflict" description="In Ref. 1; AAA35175." evidence="4" ref="1">
    <original>SI</original>
    <variation>TN</variation>
    <location>
        <begin position="401"/>
        <end position="402"/>
    </location>
</feature>
<feature type="sequence conflict" description="In Ref. 1." evidence="4" ref="1">
    <original>AYLQAGGGIVYDSDEYDEYVETMNKMMANHSTIVQAEELWADIVGSA</original>
    <variation>LTCKLAVVLFTIQLSTMNMLETMNNDGQSQYYCASRRIVGRYRRISLKRAFSVFFPLDDIFIVFE</variation>
    <location>
        <begin position="461"/>
        <end position="507"/>
    </location>
</feature>
<organism>
    <name type="scientific">Saccharomyces cerevisiae (strain ATCC 204508 / S288c)</name>
    <name type="common">Baker's yeast</name>
    <dbReference type="NCBI Taxonomy" id="559292"/>
    <lineage>
        <taxon>Eukaryota</taxon>
        <taxon>Fungi</taxon>
        <taxon>Dikarya</taxon>
        <taxon>Ascomycota</taxon>
        <taxon>Saccharomycotina</taxon>
        <taxon>Saccharomycetes</taxon>
        <taxon>Saccharomycetales</taxon>
        <taxon>Saccharomycetaceae</taxon>
        <taxon>Saccharomyces</taxon>
    </lineage>
</organism>
<name>TRPE_YEAST</name>